<reference key="1">
    <citation type="journal article" date="2009" name="Plant Mol. Biol.">
        <title>Insights into corn genes derived from large-scale cDNA sequencing.</title>
        <authorList>
            <person name="Alexandrov N.N."/>
            <person name="Brover V.V."/>
            <person name="Freidin S."/>
            <person name="Troukhan M.E."/>
            <person name="Tatarinova T.V."/>
            <person name="Zhang H."/>
            <person name="Swaller T.J."/>
            <person name="Lu Y.-P."/>
            <person name="Bouck J."/>
            <person name="Flavell R.B."/>
            <person name="Feldmann K.A."/>
        </authorList>
    </citation>
    <scope>NUCLEOTIDE SEQUENCE [LARGE SCALE MRNA]</scope>
</reference>
<reference key="2">
    <citation type="journal article" date="2012" name="Proteomics">
        <title>Differential phosphorylation of thylakoid proteins in mesophyll and bundle sheath chloroplasts from maize plants grown under low or high light.</title>
        <authorList>
            <person name="Fristedt R."/>
            <person name="Wasilewska W."/>
            <person name="Romanowska E."/>
            <person name="Vener A.V."/>
        </authorList>
    </citation>
    <scope>PROTEIN SEQUENCE OF 375-383</scope>
    <scope>SUBCELLULAR LOCATION</scope>
    <scope>PHOSPHORYLATION AT THR-377</scope>
    <source>
        <strain>cv. Olenka</strain>
        <tissue>Bundle sheath cell</tissue>
        <tissue>Mesophyll cell</tissue>
    </source>
</reference>
<dbReference type="EMBL" id="EU969029">
    <property type="protein sequence ID" value="ACG41147.1"/>
    <property type="molecule type" value="mRNA"/>
</dbReference>
<dbReference type="RefSeq" id="NP_001150975.1">
    <property type="nucleotide sequence ID" value="NM_001157503.2"/>
</dbReference>
<dbReference type="FunCoup" id="B6TVL4">
    <property type="interactions" value="1950"/>
</dbReference>
<dbReference type="STRING" id="4577.B6TVL4"/>
<dbReference type="iPTMnet" id="B6TVL4"/>
<dbReference type="PaxDb" id="4577-GRMZM2G122715_P02"/>
<dbReference type="GeneID" id="100284608"/>
<dbReference type="KEGG" id="zma:100284608"/>
<dbReference type="eggNOG" id="ENOG502QSV6">
    <property type="taxonomic scope" value="Eukaryota"/>
</dbReference>
<dbReference type="InParanoid" id="B6TVL4"/>
<dbReference type="OrthoDB" id="2015023at2759"/>
<dbReference type="Proteomes" id="UP000007305">
    <property type="component" value="Unplaced"/>
</dbReference>
<dbReference type="ExpressionAtlas" id="B6TVL4">
    <property type="expression patterns" value="baseline and differential"/>
</dbReference>
<dbReference type="GO" id="GO:0009535">
    <property type="term" value="C:chloroplast thylakoid membrane"/>
    <property type="evidence" value="ECO:0007669"/>
    <property type="project" value="UniProtKB-SubCell"/>
</dbReference>
<dbReference type="GO" id="GO:0071277">
    <property type="term" value="P:cellular response to calcium ion"/>
    <property type="evidence" value="ECO:0007669"/>
    <property type="project" value="InterPro"/>
</dbReference>
<dbReference type="GO" id="GO:0009704">
    <property type="term" value="P:de-etiolation"/>
    <property type="evidence" value="ECO:0007669"/>
    <property type="project" value="InterPro"/>
</dbReference>
<dbReference type="GO" id="GO:0090333">
    <property type="term" value="P:regulation of stomatal closure"/>
    <property type="evidence" value="ECO:0007669"/>
    <property type="project" value="InterPro"/>
</dbReference>
<dbReference type="CDD" id="cd00158">
    <property type="entry name" value="RHOD"/>
    <property type="match status" value="1"/>
</dbReference>
<dbReference type="Gene3D" id="3.40.250.10">
    <property type="entry name" value="Rhodanese-like domain"/>
    <property type="match status" value="1"/>
</dbReference>
<dbReference type="InterPro" id="IPR044690">
    <property type="entry name" value="CAS_plant"/>
</dbReference>
<dbReference type="InterPro" id="IPR001763">
    <property type="entry name" value="Rhodanese-like_dom"/>
</dbReference>
<dbReference type="InterPro" id="IPR036873">
    <property type="entry name" value="Rhodanese-like_dom_sf"/>
</dbReference>
<dbReference type="PANTHER" id="PTHR34209:SF1">
    <property type="entry name" value="CALCIUM SENSING RECEPTOR, CHLOROPLASTIC"/>
    <property type="match status" value="1"/>
</dbReference>
<dbReference type="PANTHER" id="PTHR34209">
    <property type="entry name" value="RHODANESE/CELL CYCLE CONTROL PHOSPHATASE SUPERFAMILY PROTEIN"/>
    <property type="match status" value="1"/>
</dbReference>
<dbReference type="Pfam" id="PF00581">
    <property type="entry name" value="Rhodanese"/>
    <property type="match status" value="1"/>
</dbReference>
<dbReference type="SUPFAM" id="SSF52821">
    <property type="entry name" value="Rhodanese/Cell cycle control phosphatase"/>
    <property type="match status" value="1"/>
</dbReference>
<dbReference type="PROSITE" id="PS50206">
    <property type="entry name" value="RHODANESE_3"/>
    <property type="match status" value="1"/>
</dbReference>
<keyword id="KW-0150">Chloroplast</keyword>
<keyword id="KW-0903">Direct protein sequencing</keyword>
<keyword id="KW-0472">Membrane</keyword>
<keyword id="KW-0597">Phosphoprotein</keyword>
<keyword id="KW-0934">Plastid</keyword>
<keyword id="KW-0675">Receptor</keyword>
<keyword id="KW-1185">Reference proteome</keyword>
<keyword id="KW-0793">Thylakoid</keyword>
<keyword id="KW-0809">Transit peptide</keyword>
<keyword id="KW-0812">Transmembrane</keyword>
<keyword id="KW-1133">Transmembrane helix</keyword>
<feature type="transit peptide" description="Chloroplast" evidence="2">
    <location>
        <begin position="1"/>
        <end position="39"/>
    </location>
</feature>
<feature type="chain" id="PRO_0000431068" description="Calcium sensing receptor, chloroplastic">
    <location>
        <begin position="40"/>
        <end position="395"/>
    </location>
</feature>
<feature type="topological domain" description="Lumenal, thylakoid" evidence="5">
    <location>
        <begin position="40"/>
        <end position="182"/>
    </location>
</feature>
<feature type="transmembrane region" description="Helical" evidence="2">
    <location>
        <begin position="183"/>
        <end position="203"/>
    </location>
</feature>
<feature type="topological domain" description="Stromal" evidence="5">
    <location>
        <begin position="204"/>
        <end position="395"/>
    </location>
</feature>
<feature type="domain" description="Rhodanese" evidence="3">
    <location>
        <begin position="224"/>
        <end position="345"/>
    </location>
</feature>
<feature type="region of interest" description="Disordered" evidence="4">
    <location>
        <begin position="1"/>
        <end position="27"/>
    </location>
</feature>
<feature type="compositionally biased region" description="Low complexity" evidence="4">
    <location>
        <begin position="1"/>
        <end position="12"/>
    </location>
</feature>
<feature type="modified residue" description="Phosphothreonine" evidence="5">
    <location>
        <position position="377"/>
    </location>
</feature>
<sequence length="395" mass="40094">MAPVPVSVSATLAPPPAAPPKTTSRSWERRAPADAAFAAASSVAGSAALLTLTPAAPAAALSKEDVAGSLTKAVDTVSQAIDVGGKAAEQVAAVLKALGEAVKPALPVLKSASDEALKLAAPVVSAASKQATEALQGAGVDPAPVLSVAKTAAEQSTKVIDAAKPVASAAVETITSLGPEDYVVAAGXAFLAYLLVPPVWSLVSSSLRGYKGDLTPAQALDKVTTQGYVLIDVRSEKDKAKAGLPQLPSNAKNKLVSVPLEDLPSKLKGMVRNAKKAEAEIAALKISYLKKIGKGSNVIIMDSYSDVAKTVAKTLDSVGFKNCWVMAGGFSGRKGWAQSRLGTDSYNLSVVEVVTPSRVIPAVAGRRTGTTAARIGTASSASRATTRKLLPGGVD</sequence>
<name>CAS_MAIZE</name>
<organism>
    <name type="scientific">Zea mays</name>
    <name type="common">Maize</name>
    <dbReference type="NCBI Taxonomy" id="4577"/>
    <lineage>
        <taxon>Eukaryota</taxon>
        <taxon>Viridiplantae</taxon>
        <taxon>Streptophyta</taxon>
        <taxon>Embryophyta</taxon>
        <taxon>Tracheophyta</taxon>
        <taxon>Spermatophyta</taxon>
        <taxon>Magnoliopsida</taxon>
        <taxon>Liliopsida</taxon>
        <taxon>Poales</taxon>
        <taxon>Poaceae</taxon>
        <taxon>PACMAD clade</taxon>
        <taxon>Panicoideae</taxon>
        <taxon>Andropogonodae</taxon>
        <taxon>Andropogoneae</taxon>
        <taxon>Tripsacinae</taxon>
        <taxon>Zea</taxon>
    </lineage>
</organism>
<protein>
    <recommendedName>
        <fullName>Calcium sensing receptor, chloroplastic</fullName>
    </recommendedName>
    <alternativeName>
        <fullName>Sulfurtransferase 3</fullName>
    </alternativeName>
</protein>
<comment type="function">
    <text evidence="1">Modulates cytoplasmic Ca(2+) concentration and is crucial for proper stomatal regulation in response to elevated levels of external Ca(2+). May function by regulating concentrations of inositol 1,4,5-trisphosphate (IP3), which in turn triggers release of Ca(2+) from internal stores. May play a role in de-etiolation.</text>
</comment>
<comment type="subcellular location">
    <subcellularLocation>
        <location evidence="5">Plastid</location>
        <location evidence="5">Chloroplast thylakoid membrane</location>
        <topology evidence="2">Single-pass membrane protein</topology>
        <orientation evidence="5">Stromal side</orientation>
    </subcellularLocation>
</comment>
<comment type="PTM">
    <text evidence="5">Phosphorylated in both bundle sheath and mesophyll cells, under both low and high light regimes (70 vs 900 umol photons/m-2/s).</text>
</comment>
<evidence type="ECO:0000250" key="1">
    <source>
        <dbReference type="UniProtKB" id="Q9FN48"/>
    </source>
</evidence>
<evidence type="ECO:0000255" key="2"/>
<evidence type="ECO:0000255" key="3">
    <source>
        <dbReference type="PROSITE-ProRule" id="PRU00173"/>
    </source>
</evidence>
<evidence type="ECO:0000256" key="4">
    <source>
        <dbReference type="SAM" id="MobiDB-lite"/>
    </source>
</evidence>
<evidence type="ECO:0000269" key="5">
    <source>
    </source>
</evidence>
<proteinExistence type="evidence at protein level"/>
<accession>B6TVL4</accession>